<proteinExistence type="inferred from homology"/>
<dbReference type="EMBL" id="AM933173">
    <property type="protein sequence ID" value="CAR39342.1"/>
    <property type="molecule type" value="Genomic_DNA"/>
</dbReference>
<dbReference type="RefSeq" id="WP_000102348.1">
    <property type="nucleotide sequence ID" value="NC_011274.1"/>
</dbReference>
<dbReference type="KEGG" id="seg:SG3553"/>
<dbReference type="HOGENOM" id="CLU_008142_4_2_6"/>
<dbReference type="Proteomes" id="UP000008321">
    <property type="component" value="Chromosome"/>
</dbReference>
<dbReference type="GO" id="GO:0005886">
    <property type="term" value="C:plasma membrane"/>
    <property type="evidence" value="ECO:0007669"/>
    <property type="project" value="UniProtKB-SubCell"/>
</dbReference>
<dbReference type="GO" id="GO:0015079">
    <property type="term" value="F:potassium ion transmembrane transporter activity"/>
    <property type="evidence" value="ECO:0007669"/>
    <property type="project" value="UniProtKB-UniRule"/>
</dbReference>
<dbReference type="GO" id="GO:0015293">
    <property type="term" value="F:symporter activity"/>
    <property type="evidence" value="ECO:0007669"/>
    <property type="project" value="UniProtKB-UniRule"/>
</dbReference>
<dbReference type="HAMAP" id="MF_01522">
    <property type="entry name" value="Kup"/>
    <property type="match status" value="1"/>
</dbReference>
<dbReference type="InterPro" id="IPR003855">
    <property type="entry name" value="K+_transporter"/>
</dbReference>
<dbReference type="InterPro" id="IPR053952">
    <property type="entry name" value="K_trans_C"/>
</dbReference>
<dbReference type="InterPro" id="IPR053951">
    <property type="entry name" value="K_trans_N"/>
</dbReference>
<dbReference type="InterPro" id="IPR023051">
    <property type="entry name" value="Kup"/>
</dbReference>
<dbReference type="NCBIfam" id="TIGR00794">
    <property type="entry name" value="kup"/>
    <property type="match status" value="1"/>
</dbReference>
<dbReference type="NCBIfam" id="NF008015">
    <property type="entry name" value="PRK10745.1"/>
    <property type="match status" value="1"/>
</dbReference>
<dbReference type="PANTHER" id="PTHR30540:SF79">
    <property type="entry name" value="LOW AFFINITY POTASSIUM TRANSPORT SYSTEM PROTEIN KUP"/>
    <property type="match status" value="1"/>
</dbReference>
<dbReference type="PANTHER" id="PTHR30540">
    <property type="entry name" value="OSMOTIC STRESS POTASSIUM TRANSPORTER"/>
    <property type="match status" value="1"/>
</dbReference>
<dbReference type="Pfam" id="PF02705">
    <property type="entry name" value="K_trans"/>
    <property type="match status" value="1"/>
</dbReference>
<dbReference type="Pfam" id="PF22776">
    <property type="entry name" value="K_trans_C"/>
    <property type="match status" value="1"/>
</dbReference>
<reference key="1">
    <citation type="journal article" date="2008" name="Genome Res.">
        <title>Comparative genome analysis of Salmonella enteritidis PT4 and Salmonella gallinarum 287/91 provides insights into evolutionary and host adaptation pathways.</title>
        <authorList>
            <person name="Thomson N.R."/>
            <person name="Clayton D.J."/>
            <person name="Windhorst D."/>
            <person name="Vernikos G."/>
            <person name="Davidson S."/>
            <person name="Churcher C."/>
            <person name="Quail M.A."/>
            <person name="Stevens M."/>
            <person name="Jones M.A."/>
            <person name="Watson M."/>
            <person name="Barron A."/>
            <person name="Layton A."/>
            <person name="Pickard D."/>
            <person name="Kingsley R.A."/>
            <person name="Bignell A."/>
            <person name="Clark L."/>
            <person name="Harris B."/>
            <person name="Ormond D."/>
            <person name="Abdellah Z."/>
            <person name="Brooks K."/>
            <person name="Cherevach I."/>
            <person name="Chillingworth T."/>
            <person name="Woodward J."/>
            <person name="Norberczak H."/>
            <person name="Lord A."/>
            <person name="Arrowsmith C."/>
            <person name="Jagels K."/>
            <person name="Moule S."/>
            <person name="Mungall K."/>
            <person name="Saunders M."/>
            <person name="Whitehead S."/>
            <person name="Chabalgoity J.A."/>
            <person name="Maskell D."/>
            <person name="Humphreys T."/>
            <person name="Roberts M."/>
            <person name="Barrow P.A."/>
            <person name="Dougan G."/>
            <person name="Parkhill J."/>
        </authorList>
    </citation>
    <scope>NUCLEOTIDE SEQUENCE [LARGE SCALE GENOMIC DNA]</scope>
    <source>
        <strain>287/91 / NCTC 13346</strain>
    </source>
</reference>
<keyword id="KW-0997">Cell inner membrane</keyword>
<keyword id="KW-1003">Cell membrane</keyword>
<keyword id="KW-0406">Ion transport</keyword>
<keyword id="KW-0472">Membrane</keyword>
<keyword id="KW-0630">Potassium</keyword>
<keyword id="KW-0633">Potassium transport</keyword>
<keyword id="KW-0769">Symport</keyword>
<keyword id="KW-0812">Transmembrane</keyword>
<keyword id="KW-1133">Transmembrane helix</keyword>
<keyword id="KW-0813">Transport</keyword>
<name>KUP_SALG2</name>
<sequence>MSTDNKQSLPSITLAAIGVVYGDIGTSPLYTLRECLSGQFGFGVERDAVFGFLSLIFWLLIFVVSIKYLTFVMRADNAGEGGILTLMSLAGRNTSARTTSMLVIMGLIGGSFFYGEVVITPAISVMSAIEGLEIVAPQLDTWIVPLSIIVLTLLFMIQKHGTGMVGKLFAPIMLTWFLILAVLGLRSIIANPEVLHALNPVWAVRFFLEYKTVSFIALGAVVLSITGVEALYADMGHFGKFPIRLAWFTVVLPSLVLNYFGQGALLLKHPEAIKNPFFLLAPDWALIPLLILAALATVIASQAVISGVFSLTRQAVRLGYLSPMRIIHTSEMESGQIYIPFVNWLLYFAVVVVIVSFEHSSNLAAAYGIAVTGTMVLTSILSTTVARKNWHWNKYFVALILIAFLCVDIPLFSANLDKLLSGGWLPLSLGLIMFTIMTTWKSERFRLLRRMHEHGNSLEAMIASLEKSPPVRVPGTAVYMSRALSVIPFALLHNLKHNKVLHERVILLTLRTEDAPYVHNVRRVQIEQLSPTFWRVVASYGWRETPNVEEVFHRCGLEGLSCRMMETSFFMSHESLIVGKRPWYLRLRGKLYLLLQRNALRAPDQFEIPPNRVIELGTQVEI</sequence>
<gene>
    <name evidence="1" type="primary">kup</name>
    <name type="ordered locus">SG3553</name>
</gene>
<accession>B5RFU8</accession>
<evidence type="ECO:0000255" key="1">
    <source>
        <dbReference type="HAMAP-Rule" id="MF_01522"/>
    </source>
</evidence>
<organism>
    <name type="scientific">Salmonella gallinarum (strain 287/91 / NCTC 13346)</name>
    <dbReference type="NCBI Taxonomy" id="550538"/>
    <lineage>
        <taxon>Bacteria</taxon>
        <taxon>Pseudomonadati</taxon>
        <taxon>Pseudomonadota</taxon>
        <taxon>Gammaproteobacteria</taxon>
        <taxon>Enterobacterales</taxon>
        <taxon>Enterobacteriaceae</taxon>
        <taxon>Salmonella</taxon>
    </lineage>
</organism>
<protein>
    <recommendedName>
        <fullName evidence="1">Low affinity potassium transport system protein Kup</fullName>
    </recommendedName>
    <alternativeName>
        <fullName evidence="1">Kup system potassium uptake protein</fullName>
    </alternativeName>
</protein>
<feature type="chain" id="PRO_1000190279" description="Low affinity potassium transport system protein Kup">
    <location>
        <begin position="1"/>
        <end position="622"/>
    </location>
</feature>
<feature type="transmembrane region" description="Helical" evidence="1">
    <location>
        <begin position="12"/>
        <end position="32"/>
    </location>
</feature>
<feature type="transmembrane region" description="Helical" evidence="1">
    <location>
        <begin position="49"/>
        <end position="69"/>
    </location>
</feature>
<feature type="transmembrane region" description="Helical" evidence="1">
    <location>
        <begin position="103"/>
        <end position="123"/>
    </location>
</feature>
<feature type="transmembrane region" description="Helical" evidence="1">
    <location>
        <begin position="137"/>
        <end position="157"/>
    </location>
</feature>
<feature type="transmembrane region" description="Helical" evidence="1">
    <location>
        <begin position="165"/>
        <end position="185"/>
    </location>
</feature>
<feature type="transmembrane region" description="Helical" evidence="1">
    <location>
        <begin position="213"/>
        <end position="233"/>
    </location>
</feature>
<feature type="transmembrane region" description="Helical" evidence="1">
    <location>
        <begin position="247"/>
        <end position="267"/>
    </location>
</feature>
<feature type="transmembrane region" description="Helical" evidence="1">
    <location>
        <begin position="276"/>
        <end position="296"/>
    </location>
</feature>
<feature type="transmembrane region" description="Helical" evidence="1">
    <location>
        <begin position="337"/>
        <end position="357"/>
    </location>
</feature>
<feature type="transmembrane region" description="Helical" evidence="1">
    <location>
        <begin position="363"/>
        <end position="383"/>
    </location>
</feature>
<feature type="transmembrane region" description="Helical" evidence="1">
    <location>
        <begin position="396"/>
        <end position="416"/>
    </location>
</feature>
<feature type="transmembrane region" description="Helical" evidence="1">
    <location>
        <begin position="419"/>
        <end position="439"/>
    </location>
</feature>
<comment type="function">
    <text evidence="1">Responsible for the low-affinity transport of potassium into the cell. Likely operates as a K(+):H(+) symporter.</text>
</comment>
<comment type="catalytic activity">
    <reaction evidence="1">
        <text>K(+)(in) + H(+)(in) = K(+)(out) + H(+)(out)</text>
        <dbReference type="Rhea" id="RHEA:28490"/>
        <dbReference type="ChEBI" id="CHEBI:15378"/>
        <dbReference type="ChEBI" id="CHEBI:29103"/>
    </reaction>
    <physiologicalReaction direction="right-to-left" evidence="1">
        <dbReference type="Rhea" id="RHEA:28492"/>
    </physiologicalReaction>
</comment>
<comment type="subcellular location">
    <subcellularLocation>
        <location evidence="1">Cell inner membrane</location>
        <topology evidence="1">Multi-pass membrane protein</topology>
    </subcellularLocation>
</comment>
<comment type="similarity">
    <text evidence="1">Belongs to the HAK/KUP transporter (TC 2.A.72) family.</text>
</comment>